<feature type="signal peptide" evidence="2">
    <location>
        <begin position="1"/>
        <end position="23"/>
    </location>
</feature>
<feature type="chain" id="PRO_5032510872" description="Endoglucanase MaCel5A">
    <location>
        <begin position="24"/>
        <end position="514"/>
    </location>
</feature>
<feature type="region of interest" description="Disordered" evidence="3">
    <location>
        <begin position="91"/>
        <end position="118"/>
    </location>
</feature>
<feature type="region of interest" description="Disordered" evidence="3">
    <location>
        <begin position="179"/>
        <end position="208"/>
    </location>
</feature>
<feature type="compositionally biased region" description="Low complexity" evidence="3">
    <location>
        <begin position="91"/>
        <end position="114"/>
    </location>
</feature>
<feature type="compositionally biased region" description="Low complexity" evidence="3">
    <location>
        <begin position="179"/>
        <end position="201"/>
    </location>
</feature>
<feature type="active site" description="Proton donor" evidence="1">
    <location>
        <position position="346"/>
    </location>
</feature>
<feature type="active site" description="Nucleophile" evidence="1">
    <location>
        <position position="439"/>
    </location>
</feature>
<protein>
    <recommendedName>
        <fullName evidence="6">Endoglucanase MaCel5A</fullName>
        <ecNumber evidence="4">3.2.1.4</ecNumber>
    </recommendedName>
    <alternativeName>
        <fullName evidence="5">Endo-beta-1,4-glucanase</fullName>
    </alternativeName>
</protein>
<dbReference type="EC" id="3.2.1.4" evidence="4"/>
<dbReference type="EMBL" id="MT434692">
    <property type="protein sequence ID" value="QSR83793.1"/>
    <property type="molecule type" value="Genomic_DNA"/>
</dbReference>
<dbReference type="RefSeq" id="WP_160153203.1">
    <property type="nucleotide sequence ID" value="NZ_CP047569.1"/>
</dbReference>
<dbReference type="SMR" id="A0A8A1G1R1"/>
<dbReference type="OrthoDB" id="9775889at2"/>
<dbReference type="GO" id="GO:0005576">
    <property type="term" value="C:extracellular region"/>
    <property type="evidence" value="ECO:0007669"/>
    <property type="project" value="InterPro"/>
</dbReference>
<dbReference type="GO" id="GO:0030246">
    <property type="term" value="F:carbohydrate binding"/>
    <property type="evidence" value="ECO:0007669"/>
    <property type="project" value="InterPro"/>
</dbReference>
<dbReference type="GO" id="GO:0004553">
    <property type="term" value="F:hydrolase activity, hydrolyzing O-glycosyl compounds"/>
    <property type="evidence" value="ECO:0007669"/>
    <property type="project" value="InterPro"/>
</dbReference>
<dbReference type="GO" id="GO:0000272">
    <property type="term" value="P:polysaccharide catabolic process"/>
    <property type="evidence" value="ECO:0007669"/>
    <property type="project" value="InterPro"/>
</dbReference>
<dbReference type="CDD" id="cd12215">
    <property type="entry name" value="ChiC_BD"/>
    <property type="match status" value="1"/>
</dbReference>
<dbReference type="Gene3D" id="2.10.10.20">
    <property type="entry name" value="Carbohydrate-binding module superfamily 5/12"/>
    <property type="match status" value="1"/>
</dbReference>
<dbReference type="Gene3D" id="3.20.20.80">
    <property type="entry name" value="Glycosidases"/>
    <property type="match status" value="1"/>
</dbReference>
<dbReference type="InterPro" id="IPR003610">
    <property type="entry name" value="CBM5/12"/>
</dbReference>
<dbReference type="InterPro" id="IPR036573">
    <property type="entry name" value="CBM_sf_5/12"/>
</dbReference>
<dbReference type="InterPro" id="IPR001547">
    <property type="entry name" value="Glyco_hydro_5"/>
</dbReference>
<dbReference type="InterPro" id="IPR018087">
    <property type="entry name" value="Glyco_hydro_5_CS"/>
</dbReference>
<dbReference type="InterPro" id="IPR017853">
    <property type="entry name" value="Glycoside_hydrolase_SF"/>
</dbReference>
<dbReference type="PANTHER" id="PTHR34142">
    <property type="entry name" value="ENDO-BETA-1,4-GLUCANASE A"/>
    <property type="match status" value="1"/>
</dbReference>
<dbReference type="PANTHER" id="PTHR34142:SF1">
    <property type="entry name" value="GLYCOSIDE HYDROLASE FAMILY 5 DOMAIN-CONTAINING PROTEIN"/>
    <property type="match status" value="1"/>
</dbReference>
<dbReference type="Pfam" id="PF02839">
    <property type="entry name" value="CBM_5_12"/>
    <property type="match status" value="1"/>
</dbReference>
<dbReference type="Pfam" id="PF00150">
    <property type="entry name" value="Cellulase"/>
    <property type="match status" value="1"/>
</dbReference>
<dbReference type="SMART" id="SM00495">
    <property type="entry name" value="ChtBD3"/>
    <property type="match status" value="2"/>
</dbReference>
<dbReference type="SUPFAM" id="SSF51445">
    <property type="entry name" value="(Trans)glycosidases"/>
    <property type="match status" value="1"/>
</dbReference>
<dbReference type="SUPFAM" id="SSF51055">
    <property type="entry name" value="Carbohydrate binding domain"/>
    <property type="match status" value="2"/>
</dbReference>
<dbReference type="PROSITE" id="PS00659">
    <property type="entry name" value="GLYCOSYL_HYDROL_F5"/>
    <property type="match status" value="1"/>
</dbReference>
<evidence type="ECO:0000250" key="1">
    <source>
        <dbReference type="UniProtKB" id="O85465"/>
    </source>
</evidence>
<evidence type="ECO:0000255" key="2"/>
<evidence type="ECO:0000256" key="3">
    <source>
        <dbReference type="SAM" id="MobiDB-lite"/>
    </source>
</evidence>
<evidence type="ECO:0000269" key="4">
    <source>
    </source>
</evidence>
<evidence type="ECO:0000303" key="5">
    <source>
    </source>
</evidence>
<evidence type="ECO:0000305" key="6"/>
<organism>
    <name type="scientific">Microbulbifer sp. (strain ALW1)</name>
    <dbReference type="NCBI Taxonomy" id="1516059"/>
    <lineage>
        <taxon>Bacteria</taxon>
        <taxon>Pseudomonadati</taxon>
        <taxon>Pseudomonadota</taxon>
        <taxon>Gammaproteobacteria</taxon>
        <taxon>Cellvibrionales</taxon>
        <taxon>Microbulbiferaceae</taxon>
        <taxon>Microbulbifer</taxon>
    </lineage>
</organism>
<comment type="function">
    <text evidence="4">Endoglucanase that exhibits highest activity toward barley beta-glucan, lower activity toward carboxymethyl cellulose (CMC-Na), and marginal activity toward laminarin and xylan.</text>
</comment>
<comment type="catalytic activity">
    <reaction evidence="4">
        <text>Endohydrolysis of (1-&gt;4)-beta-D-glucosidic linkages in cellulose, lichenin and cereal beta-D-glucans.</text>
        <dbReference type="EC" id="3.2.1.4"/>
    </reaction>
</comment>
<comment type="activity regulation">
    <text evidence="4">Exhibits strong halostability and halotolerance (PubMed:33968593). The activity increases about tenfold in the presence of 0.5 M NaCl, and about fivefold in the presence of 4.0 M NaCl (PubMed:33968593). Tolerates detergents, but activity is decreased in the presence of EDTA (PubMed:33968593). Activity is enhanced in the presence of Mn(2+), Ca(2+), Ba(2+) or Mg(2+), and decreased in the presence of Zn(2+), Cu(2+), Al(3+) or Fe(3+) (PubMed:33968593).</text>
</comment>
<comment type="biophysicochemical properties">
    <kinetics>
        <KM evidence="4">1.12 mg/ml for barley beta-glucan</KM>
        <KM evidence="4">6.02 mg/ml for CMC-Na</KM>
        <Vmax evidence="4">73.53 umol/min/mg enzyme with barley beta-glucan as substrate</Vmax>
        <Vmax evidence="4">59.17 umol/min/mg enzyme with CMC-Na as substrate</Vmax>
    </kinetics>
    <phDependence>
        <text evidence="4">Optimum pH is 6.0 (PubMed:33968593). Is relatively stable between pH 5.0 and 11.0 (PubMed:33968593).</text>
    </phDependence>
    <temperatureDependence>
        <text evidence="4">Optimum temperature is 50 degrees Celsius with CMC-Na as substrate (PubMed:33968593). Thermostable: retains 59% of its residual activity after exposure to 70 degrees Celsius for 30 minutes and 49% of its activity after exposure to 80 degrees Celsius for 30 minutes (PubMed:33968593).</text>
    </temperatureDependence>
</comment>
<comment type="biotechnology">
    <text evidence="4">The halophilic feature and the tolerance to a broad range of pH and surfactants would favor the industrial application of MaCel5A in diverse environments.</text>
</comment>
<comment type="similarity">
    <text evidence="6">Belongs to the glycosyl hydrolase 5 (cellulase A) family.</text>
</comment>
<gene>
    <name evidence="5" type="primary">MaCel5A</name>
</gene>
<reference key="1">
    <citation type="journal article" date="2021" name="3 Biotech.">
        <title>Molecular cloning and characterization of a thermostable and halotolerant endo-beta-1,4-glucanase from Microbulbifer sp. ALW1.</title>
        <authorList>
            <person name="Li H."/>
            <person name="Hu Q."/>
            <person name="Hong X."/>
            <person name="Jiang Z."/>
            <person name="Ni H."/>
            <person name="Li Q."/>
            <person name="Zhu Y."/>
        </authorList>
    </citation>
    <scope>NUCLEOTIDE SEQUENCE [GENOMIC DNA]</scope>
    <scope>FUNCTION</scope>
    <scope>CATALYTIC ACTIVITY</scope>
    <scope>ACTIVITY REGULATION</scope>
    <scope>BIOPHYSICOCHEMICAL PROPERTIES</scope>
    <scope>BIOTECHNOLOGY</scope>
    <source>
        <strain>ALW1</strain>
    </source>
</reference>
<accession>A0A8A1G1R1</accession>
<name>GUN5_MICS2</name>
<proteinExistence type="evidence at protein level"/>
<keyword id="KW-0119">Carbohydrate metabolism</keyword>
<keyword id="KW-0326">Glycosidase</keyword>
<keyword id="KW-0378">Hydrolase</keyword>
<keyword id="KW-0732">Signal</keyword>
<sequence length="514" mass="54456">MKRILFTAGGCLFYLLLAVKAYAYDCSATPAYQDGVNYQSGDLVSNTGAAYRCNVAGWCSTGGAYAPGTGWAWTEAWDELGSCDGGAGSSGSSSSSSSSSSSSSGSSSSSSGSGSSSGGTSCDGIEAWQVASIYTEGNVVQQNGERYIANWWNQGQSPEDNSGAYEVWSAAGSCSGAGSSSSSSGGTSSSGSSSSGVSSSGGSSGGDSPIARHGKLHVCGNGLCNADNVPVQLRGMSTHGLQWYGWGNCITGNSLDTLAEDWNADILRVSLYVQEGGYETDPAGYTAQVSHIIDEVTARGMYVLVDWHQLDPGDPNANLDNARQFFTDIAQAHGDKTNIIYDVANEPNNVSWDAIQRYAMEVIPVIRQYAPDAVVLVGTHGWASLGISDGGSAQDIFNNPVTIDNIMYTFHFYAASHGQVYRDELRSALERGMPVFVTEWGSQTYTGDDGNDFVSTQAYLDLLDQYQISWTNWNYSDDFRTGAVWNTGTCSADSWGVGNLKEAGAWVRDKIRNR</sequence>